<proteinExistence type="inferred from homology"/>
<reference key="1">
    <citation type="journal article" date="2001" name="Lancet">
        <title>Whole genome sequencing of meticillin-resistant Staphylococcus aureus.</title>
        <authorList>
            <person name="Kuroda M."/>
            <person name="Ohta T."/>
            <person name="Uchiyama I."/>
            <person name="Baba T."/>
            <person name="Yuzawa H."/>
            <person name="Kobayashi I."/>
            <person name="Cui L."/>
            <person name="Oguchi A."/>
            <person name="Aoki K."/>
            <person name="Nagai Y."/>
            <person name="Lian J.-Q."/>
            <person name="Ito T."/>
            <person name="Kanamori M."/>
            <person name="Matsumaru H."/>
            <person name="Maruyama A."/>
            <person name="Murakami H."/>
            <person name="Hosoyama A."/>
            <person name="Mizutani-Ui Y."/>
            <person name="Takahashi N.K."/>
            <person name="Sawano T."/>
            <person name="Inoue R."/>
            <person name="Kaito C."/>
            <person name="Sekimizu K."/>
            <person name="Hirakawa H."/>
            <person name="Kuhara S."/>
            <person name="Goto S."/>
            <person name="Yabuzaki J."/>
            <person name="Kanehisa M."/>
            <person name="Yamashita A."/>
            <person name="Oshima K."/>
            <person name="Furuya K."/>
            <person name="Yoshino C."/>
            <person name="Shiba T."/>
            <person name="Hattori M."/>
            <person name="Ogasawara N."/>
            <person name="Hayashi H."/>
            <person name="Hiramatsu K."/>
        </authorList>
    </citation>
    <scope>NUCLEOTIDE SEQUENCE [LARGE SCALE GENOMIC DNA]</scope>
    <source>
        <strain>Mu50 / ATCC 700699</strain>
    </source>
</reference>
<name>TRMD_STAAM</name>
<evidence type="ECO:0000250" key="1"/>
<evidence type="ECO:0000305" key="2"/>
<accession>P66970</accession>
<accession>Q99UN0</accession>
<keyword id="KW-0963">Cytoplasm</keyword>
<keyword id="KW-0489">Methyltransferase</keyword>
<keyword id="KW-0949">S-adenosyl-L-methionine</keyword>
<keyword id="KW-0808">Transferase</keyword>
<keyword id="KW-0819">tRNA processing</keyword>
<organism>
    <name type="scientific">Staphylococcus aureus (strain Mu50 / ATCC 700699)</name>
    <dbReference type="NCBI Taxonomy" id="158878"/>
    <lineage>
        <taxon>Bacteria</taxon>
        <taxon>Bacillati</taxon>
        <taxon>Bacillota</taxon>
        <taxon>Bacilli</taxon>
        <taxon>Bacillales</taxon>
        <taxon>Staphylococcaceae</taxon>
        <taxon>Staphylococcus</taxon>
    </lineage>
</organism>
<comment type="function">
    <text evidence="1">Specifically methylates guanosine-37 in various tRNAs.</text>
</comment>
<comment type="catalytic activity">
    <reaction>
        <text>guanosine(37) in tRNA + S-adenosyl-L-methionine = N(1)-methylguanosine(37) in tRNA + S-adenosyl-L-homocysteine + H(+)</text>
        <dbReference type="Rhea" id="RHEA:36899"/>
        <dbReference type="Rhea" id="RHEA-COMP:10145"/>
        <dbReference type="Rhea" id="RHEA-COMP:10147"/>
        <dbReference type="ChEBI" id="CHEBI:15378"/>
        <dbReference type="ChEBI" id="CHEBI:57856"/>
        <dbReference type="ChEBI" id="CHEBI:59789"/>
        <dbReference type="ChEBI" id="CHEBI:73542"/>
        <dbReference type="ChEBI" id="CHEBI:74269"/>
        <dbReference type="EC" id="2.1.1.228"/>
    </reaction>
</comment>
<comment type="subunit">
    <text evidence="1">Homodimer.</text>
</comment>
<comment type="subcellular location">
    <subcellularLocation>
        <location evidence="2">Cytoplasm</location>
    </subcellularLocation>
</comment>
<comment type="similarity">
    <text evidence="2">Belongs to the RNA methyltransferase TrmD family.</text>
</comment>
<protein>
    <recommendedName>
        <fullName>tRNA (guanine-N(1)-)-methyltransferase</fullName>
        <ecNumber>2.1.1.228</ecNumber>
    </recommendedName>
    <alternativeName>
        <fullName>M1G-methyltransferase</fullName>
    </alternativeName>
    <alternativeName>
        <fullName>tRNA [GM37] methyltransferase</fullName>
    </alternativeName>
</protein>
<sequence length="245" mass="28114">MKIDYLTLFPEMFDGVLNHSIMKRAQENNKLQINTVNFRDYAINKHNQVDDYPYGGGQGMVLKPEPVFNAMEDLDVTEQTRVILMCPQGEPFSHQKAVELSKADHIVFICGHYEGYDERIRTHLVTDEISMGDYVLTGGELPAMTMTDAIVRLIPGVLGNEQSHQDDSFSDGLLEFPQYTRPREFKGLTVPDVLLSGNHANIDAWRHEQKLIRTYNKRPDLIEKYPLTNEDKQILERYKIGLKKG</sequence>
<dbReference type="EC" id="2.1.1.228"/>
<dbReference type="EMBL" id="BA000017">
    <property type="protein sequence ID" value="BAB57402.1"/>
    <property type="molecule type" value="Genomic_DNA"/>
</dbReference>
<dbReference type="RefSeq" id="WP_000687330.1">
    <property type="nucleotide sequence ID" value="NC_002758.2"/>
</dbReference>
<dbReference type="SMR" id="P66970"/>
<dbReference type="KEGG" id="sav:SAV1240"/>
<dbReference type="HOGENOM" id="CLU_047363_0_1_9"/>
<dbReference type="PhylomeDB" id="P66970"/>
<dbReference type="Proteomes" id="UP000002481">
    <property type="component" value="Chromosome"/>
</dbReference>
<dbReference type="GO" id="GO:0005829">
    <property type="term" value="C:cytosol"/>
    <property type="evidence" value="ECO:0007669"/>
    <property type="project" value="TreeGrafter"/>
</dbReference>
<dbReference type="GO" id="GO:0052906">
    <property type="term" value="F:tRNA (guanine(37)-N1)-methyltransferase activity"/>
    <property type="evidence" value="ECO:0007669"/>
    <property type="project" value="UniProtKB-UniRule"/>
</dbReference>
<dbReference type="GO" id="GO:0002939">
    <property type="term" value="P:tRNA N1-guanine methylation"/>
    <property type="evidence" value="ECO:0007669"/>
    <property type="project" value="TreeGrafter"/>
</dbReference>
<dbReference type="CDD" id="cd18080">
    <property type="entry name" value="TrmD-like"/>
    <property type="match status" value="1"/>
</dbReference>
<dbReference type="FunFam" id="1.10.1270.20:FF:000001">
    <property type="entry name" value="tRNA (guanine-N(1)-)-methyltransferase"/>
    <property type="match status" value="1"/>
</dbReference>
<dbReference type="FunFam" id="3.40.1280.10:FF:000001">
    <property type="entry name" value="tRNA (guanine-N(1)-)-methyltransferase"/>
    <property type="match status" value="1"/>
</dbReference>
<dbReference type="Gene3D" id="3.40.1280.10">
    <property type="match status" value="1"/>
</dbReference>
<dbReference type="Gene3D" id="1.10.1270.20">
    <property type="entry name" value="tRNA(m1g37)methyltransferase, domain 2"/>
    <property type="match status" value="1"/>
</dbReference>
<dbReference type="HAMAP" id="MF_00605">
    <property type="entry name" value="TrmD"/>
    <property type="match status" value="1"/>
</dbReference>
<dbReference type="InterPro" id="IPR029028">
    <property type="entry name" value="Alpha/beta_knot_MTases"/>
</dbReference>
<dbReference type="InterPro" id="IPR023148">
    <property type="entry name" value="tRNA_m1G_MeTrfase_C_sf"/>
</dbReference>
<dbReference type="InterPro" id="IPR002649">
    <property type="entry name" value="tRNA_m1G_MeTrfase_TrmD"/>
</dbReference>
<dbReference type="InterPro" id="IPR029026">
    <property type="entry name" value="tRNA_m1G_MTases_N"/>
</dbReference>
<dbReference type="InterPro" id="IPR016009">
    <property type="entry name" value="tRNA_MeTrfase_TRMD/TRM10"/>
</dbReference>
<dbReference type="NCBIfam" id="NF000648">
    <property type="entry name" value="PRK00026.1"/>
    <property type="match status" value="1"/>
</dbReference>
<dbReference type="NCBIfam" id="TIGR00088">
    <property type="entry name" value="trmD"/>
    <property type="match status" value="1"/>
</dbReference>
<dbReference type="PANTHER" id="PTHR46417">
    <property type="entry name" value="TRNA (GUANINE-N(1)-)-METHYLTRANSFERASE"/>
    <property type="match status" value="1"/>
</dbReference>
<dbReference type="PANTHER" id="PTHR46417:SF1">
    <property type="entry name" value="TRNA (GUANINE-N(1)-)-METHYLTRANSFERASE"/>
    <property type="match status" value="1"/>
</dbReference>
<dbReference type="Pfam" id="PF01746">
    <property type="entry name" value="tRNA_m1G_MT"/>
    <property type="match status" value="1"/>
</dbReference>
<dbReference type="PIRSF" id="PIRSF000386">
    <property type="entry name" value="tRNA_mtase"/>
    <property type="match status" value="1"/>
</dbReference>
<dbReference type="SUPFAM" id="SSF75217">
    <property type="entry name" value="alpha/beta knot"/>
    <property type="match status" value="1"/>
</dbReference>
<feature type="chain" id="PRO_0000060459" description="tRNA (guanine-N(1)-)-methyltransferase">
    <location>
        <begin position="1"/>
        <end position="245"/>
    </location>
</feature>
<feature type="binding site" evidence="1">
    <location>
        <position position="111"/>
    </location>
    <ligand>
        <name>S-adenosyl-L-methionine</name>
        <dbReference type="ChEBI" id="CHEBI:59789"/>
    </ligand>
</feature>
<feature type="binding site" evidence="1">
    <location>
        <begin position="131"/>
        <end position="136"/>
    </location>
    <ligand>
        <name>S-adenosyl-L-methionine</name>
        <dbReference type="ChEBI" id="CHEBI:59789"/>
    </ligand>
</feature>
<gene>
    <name type="primary">trmD</name>
    <name type="ordered locus">SAV1240</name>
</gene>